<accession>B1YSR6</accession>
<gene>
    <name evidence="1" type="primary">rsmH</name>
    <name type="synonym">mraW</name>
    <name type="ordered locus">BamMC406_0480</name>
</gene>
<evidence type="ECO:0000255" key="1">
    <source>
        <dbReference type="HAMAP-Rule" id="MF_01007"/>
    </source>
</evidence>
<sequence length="313" mass="34377">MGNELQHRTVLLDEAVESLVTRPDGIYVDGTFGRGGHSRAVLARLAEAGRLIAFDKDPRAIETAQRIEDARFSIVHDSFASMRDALAARGIEKVSGVLLDLGVSSPQVDDPARGFSFRADGPLDMRMDPTRGESAAEWLARASVQELTEVIRDYGEERFAFQIAKALVARRAESDRLGPLDTTGELAQIVGHVVKTREKGKDPATRTFQAIRIHVNQELADLQVVLDAALSLLEQGGRLVVISFHSLEDRIVKRFMQAHASAPAVDRRLPIRAVDLPSPPLKIISRQFPSEAEVVANPRARSAVMRIAERVTP</sequence>
<name>RSMH_BURA4</name>
<proteinExistence type="inferred from homology"/>
<feature type="chain" id="PRO_0000386767" description="Ribosomal RNA small subunit methyltransferase H">
    <location>
        <begin position="1"/>
        <end position="313"/>
    </location>
</feature>
<feature type="binding site" evidence="1">
    <location>
        <begin position="35"/>
        <end position="37"/>
    </location>
    <ligand>
        <name>S-adenosyl-L-methionine</name>
        <dbReference type="ChEBI" id="CHEBI:59789"/>
    </ligand>
</feature>
<feature type="binding site" evidence="1">
    <location>
        <position position="55"/>
    </location>
    <ligand>
        <name>S-adenosyl-L-methionine</name>
        <dbReference type="ChEBI" id="CHEBI:59789"/>
    </ligand>
</feature>
<feature type="binding site" evidence="1">
    <location>
        <position position="79"/>
    </location>
    <ligand>
        <name>S-adenosyl-L-methionine</name>
        <dbReference type="ChEBI" id="CHEBI:59789"/>
    </ligand>
</feature>
<feature type="binding site" evidence="1">
    <location>
        <position position="100"/>
    </location>
    <ligand>
        <name>S-adenosyl-L-methionine</name>
        <dbReference type="ChEBI" id="CHEBI:59789"/>
    </ligand>
</feature>
<feature type="binding site" evidence="1">
    <location>
        <position position="107"/>
    </location>
    <ligand>
        <name>S-adenosyl-L-methionine</name>
        <dbReference type="ChEBI" id="CHEBI:59789"/>
    </ligand>
</feature>
<keyword id="KW-0963">Cytoplasm</keyword>
<keyword id="KW-0489">Methyltransferase</keyword>
<keyword id="KW-0698">rRNA processing</keyword>
<keyword id="KW-0949">S-adenosyl-L-methionine</keyword>
<keyword id="KW-0808">Transferase</keyword>
<reference key="1">
    <citation type="submission" date="2008-04" db="EMBL/GenBank/DDBJ databases">
        <title>Complete sequence of chromosome 1 of Burkholderia ambifaria MC40-6.</title>
        <authorList>
            <person name="Copeland A."/>
            <person name="Lucas S."/>
            <person name="Lapidus A."/>
            <person name="Glavina del Rio T."/>
            <person name="Dalin E."/>
            <person name="Tice H."/>
            <person name="Pitluck S."/>
            <person name="Chain P."/>
            <person name="Malfatti S."/>
            <person name="Shin M."/>
            <person name="Vergez L."/>
            <person name="Lang D."/>
            <person name="Schmutz J."/>
            <person name="Larimer F."/>
            <person name="Land M."/>
            <person name="Hauser L."/>
            <person name="Kyrpides N."/>
            <person name="Lykidis A."/>
            <person name="Ramette A."/>
            <person name="Konstantinidis K."/>
            <person name="Tiedje J."/>
            <person name="Richardson P."/>
        </authorList>
    </citation>
    <scope>NUCLEOTIDE SEQUENCE [LARGE SCALE GENOMIC DNA]</scope>
    <source>
        <strain>MC40-6</strain>
    </source>
</reference>
<dbReference type="EC" id="2.1.1.199" evidence="1"/>
<dbReference type="EMBL" id="CP001025">
    <property type="protein sequence ID" value="ACB62977.1"/>
    <property type="molecule type" value="Genomic_DNA"/>
</dbReference>
<dbReference type="RefSeq" id="WP_006752434.1">
    <property type="nucleotide sequence ID" value="NC_010551.1"/>
</dbReference>
<dbReference type="SMR" id="B1YSR6"/>
<dbReference type="KEGG" id="bac:BamMC406_0480"/>
<dbReference type="HOGENOM" id="CLU_038422_2_0_4"/>
<dbReference type="OrthoDB" id="9806637at2"/>
<dbReference type="Proteomes" id="UP000001680">
    <property type="component" value="Chromosome 1"/>
</dbReference>
<dbReference type="GO" id="GO:0005737">
    <property type="term" value="C:cytoplasm"/>
    <property type="evidence" value="ECO:0007669"/>
    <property type="project" value="UniProtKB-SubCell"/>
</dbReference>
<dbReference type="GO" id="GO:0071424">
    <property type="term" value="F:rRNA (cytosine-N4-)-methyltransferase activity"/>
    <property type="evidence" value="ECO:0007669"/>
    <property type="project" value="UniProtKB-UniRule"/>
</dbReference>
<dbReference type="GO" id="GO:0070475">
    <property type="term" value="P:rRNA base methylation"/>
    <property type="evidence" value="ECO:0007669"/>
    <property type="project" value="UniProtKB-UniRule"/>
</dbReference>
<dbReference type="Gene3D" id="1.10.150.170">
    <property type="entry name" value="Putative methyltransferase TM0872, insert domain"/>
    <property type="match status" value="1"/>
</dbReference>
<dbReference type="Gene3D" id="3.40.50.150">
    <property type="entry name" value="Vaccinia Virus protein VP39"/>
    <property type="match status" value="1"/>
</dbReference>
<dbReference type="HAMAP" id="MF_01007">
    <property type="entry name" value="16SrRNA_methyltr_H"/>
    <property type="match status" value="1"/>
</dbReference>
<dbReference type="InterPro" id="IPR002903">
    <property type="entry name" value="RsmH"/>
</dbReference>
<dbReference type="InterPro" id="IPR023397">
    <property type="entry name" value="SAM-dep_MeTrfase_MraW_recog"/>
</dbReference>
<dbReference type="InterPro" id="IPR029063">
    <property type="entry name" value="SAM-dependent_MTases_sf"/>
</dbReference>
<dbReference type="NCBIfam" id="TIGR00006">
    <property type="entry name" value="16S rRNA (cytosine(1402)-N(4))-methyltransferase RsmH"/>
    <property type="match status" value="1"/>
</dbReference>
<dbReference type="PANTHER" id="PTHR11265:SF0">
    <property type="entry name" value="12S RRNA N4-METHYLCYTIDINE METHYLTRANSFERASE"/>
    <property type="match status" value="1"/>
</dbReference>
<dbReference type="PANTHER" id="PTHR11265">
    <property type="entry name" value="S-ADENOSYL-METHYLTRANSFERASE MRAW"/>
    <property type="match status" value="1"/>
</dbReference>
<dbReference type="Pfam" id="PF01795">
    <property type="entry name" value="Methyltransf_5"/>
    <property type="match status" value="1"/>
</dbReference>
<dbReference type="PIRSF" id="PIRSF004486">
    <property type="entry name" value="MraW"/>
    <property type="match status" value="1"/>
</dbReference>
<dbReference type="SUPFAM" id="SSF81799">
    <property type="entry name" value="Putative methyltransferase TM0872, insert domain"/>
    <property type="match status" value="1"/>
</dbReference>
<dbReference type="SUPFAM" id="SSF53335">
    <property type="entry name" value="S-adenosyl-L-methionine-dependent methyltransferases"/>
    <property type="match status" value="1"/>
</dbReference>
<protein>
    <recommendedName>
        <fullName evidence="1">Ribosomal RNA small subunit methyltransferase H</fullName>
        <ecNumber evidence="1">2.1.1.199</ecNumber>
    </recommendedName>
    <alternativeName>
        <fullName evidence="1">16S rRNA m(4)C1402 methyltransferase</fullName>
    </alternativeName>
    <alternativeName>
        <fullName evidence="1">rRNA (cytosine-N(4)-)-methyltransferase RsmH</fullName>
    </alternativeName>
</protein>
<comment type="function">
    <text evidence="1">Specifically methylates the N4 position of cytidine in position 1402 (C1402) of 16S rRNA.</text>
</comment>
<comment type="catalytic activity">
    <reaction evidence="1">
        <text>cytidine(1402) in 16S rRNA + S-adenosyl-L-methionine = N(4)-methylcytidine(1402) in 16S rRNA + S-adenosyl-L-homocysteine + H(+)</text>
        <dbReference type="Rhea" id="RHEA:42928"/>
        <dbReference type="Rhea" id="RHEA-COMP:10286"/>
        <dbReference type="Rhea" id="RHEA-COMP:10287"/>
        <dbReference type="ChEBI" id="CHEBI:15378"/>
        <dbReference type="ChEBI" id="CHEBI:57856"/>
        <dbReference type="ChEBI" id="CHEBI:59789"/>
        <dbReference type="ChEBI" id="CHEBI:74506"/>
        <dbReference type="ChEBI" id="CHEBI:82748"/>
        <dbReference type="EC" id="2.1.1.199"/>
    </reaction>
</comment>
<comment type="subcellular location">
    <subcellularLocation>
        <location evidence="1">Cytoplasm</location>
    </subcellularLocation>
</comment>
<comment type="similarity">
    <text evidence="1">Belongs to the methyltransferase superfamily. RsmH family.</text>
</comment>
<organism>
    <name type="scientific">Burkholderia ambifaria (strain MC40-6)</name>
    <dbReference type="NCBI Taxonomy" id="398577"/>
    <lineage>
        <taxon>Bacteria</taxon>
        <taxon>Pseudomonadati</taxon>
        <taxon>Pseudomonadota</taxon>
        <taxon>Betaproteobacteria</taxon>
        <taxon>Burkholderiales</taxon>
        <taxon>Burkholderiaceae</taxon>
        <taxon>Burkholderia</taxon>
        <taxon>Burkholderia cepacia complex</taxon>
    </lineage>
</organism>